<name>RL5_AEDAE</name>
<organism>
    <name type="scientific">Aedes aegypti</name>
    <name type="common">Yellowfever mosquito</name>
    <name type="synonym">Culex aegypti</name>
    <dbReference type="NCBI Taxonomy" id="7159"/>
    <lineage>
        <taxon>Eukaryota</taxon>
        <taxon>Metazoa</taxon>
        <taxon>Ecdysozoa</taxon>
        <taxon>Arthropoda</taxon>
        <taxon>Hexapoda</taxon>
        <taxon>Insecta</taxon>
        <taxon>Pterygota</taxon>
        <taxon>Neoptera</taxon>
        <taxon>Endopterygota</taxon>
        <taxon>Diptera</taxon>
        <taxon>Nematocera</taxon>
        <taxon>Culicoidea</taxon>
        <taxon>Culicidae</taxon>
        <taxon>Culicinae</taxon>
        <taxon>Aedini</taxon>
        <taxon>Aedes</taxon>
        <taxon>Stegomyia</taxon>
    </lineage>
</organism>
<keyword id="KW-0963">Cytoplasm</keyword>
<keyword id="KW-0539">Nucleus</keyword>
<keyword id="KW-1185">Reference proteome</keyword>
<keyword id="KW-0687">Ribonucleoprotein</keyword>
<keyword id="KW-0689">Ribosomal protein</keyword>
<keyword id="KW-0694">RNA-binding</keyword>
<keyword id="KW-0699">rRNA-binding</keyword>
<sequence>MGFVKVVKNKQYFKRYQVRFRRRREGKTDYYARKRLIFQDKNKYNTPKYRLIVRLSNRDITCQIAYARIEGDRIVCAAYSHELPRYGVKVGLTNYAAAYCTGLLVARRILQKLRLDTLYTGCTDVTGEEYLVEPVDDGPGAFRCYLDVGLARTTTGARIFGAMKGAVDGGLNIPHSVKRFPGYSAENKSFNAEVHRAHIFGQHVADYMRTLEEEDEDAYKRQFSKYIALGIKADDIETIYKNAHAGIRKDPAFHKKPEKKVTKKRFNLAKLTLEARKAKIAKHKADFLAKIQADVEA</sequence>
<accession>Q1HQU2</accession>
<protein>
    <recommendedName>
        <fullName evidence="2">Large ribosomal subunit protein uL18</fullName>
    </recommendedName>
    <alternativeName>
        <fullName>60S ribosomal protein L5</fullName>
    </alternativeName>
</protein>
<reference key="1">
    <citation type="journal article" date="2007" name="BMC Genomics">
        <title>An annotated catalogue of salivary gland transcripts in the adult female mosquito, Aedes aegypti.</title>
        <authorList>
            <person name="Ribeiro J.M.C."/>
            <person name="Arca B."/>
            <person name="Lombardo F."/>
            <person name="Calvo E."/>
            <person name="Phan V.M."/>
            <person name="Chandra P.K."/>
            <person name="Wikel S.K."/>
        </authorList>
    </citation>
    <scope>NUCLEOTIDE SEQUENCE [LARGE SCALE MRNA]</scope>
    <source>
        <strain>Black-eyed Liverpool</strain>
        <tissue>Salivary gland</tissue>
    </source>
</reference>
<reference key="2">
    <citation type="journal article" date="2007" name="Science">
        <title>Genome sequence of Aedes aegypti, a major arbovirus vector.</title>
        <authorList>
            <person name="Nene V."/>
            <person name="Wortman J.R."/>
            <person name="Lawson D."/>
            <person name="Haas B.J."/>
            <person name="Kodira C.D."/>
            <person name="Tu Z.J."/>
            <person name="Loftus B.J."/>
            <person name="Xi Z."/>
            <person name="Megy K."/>
            <person name="Grabherr M."/>
            <person name="Ren Q."/>
            <person name="Zdobnov E.M."/>
            <person name="Lobo N.F."/>
            <person name="Campbell K.S."/>
            <person name="Brown S.E."/>
            <person name="Bonaldo M.F."/>
            <person name="Zhu J."/>
            <person name="Sinkins S.P."/>
            <person name="Hogenkamp D.G."/>
            <person name="Amedeo P."/>
            <person name="Arensburger P."/>
            <person name="Atkinson P.W."/>
            <person name="Bidwell S.L."/>
            <person name="Biedler J."/>
            <person name="Birney E."/>
            <person name="Bruggner R.V."/>
            <person name="Costas J."/>
            <person name="Coy M.R."/>
            <person name="Crabtree J."/>
            <person name="Crawford M."/>
            <person name="DeBruyn B."/>
            <person name="DeCaprio D."/>
            <person name="Eiglmeier K."/>
            <person name="Eisenstadt E."/>
            <person name="El-Dorry H."/>
            <person name="Gelbart W.M."/>
            <person name="Gomes S.L."/>
            <person name="Hammond M."/>
            <person name="Hannick L.I."/>
            <person name="Hogan J.R."/>
            <person name="Holmes M.H."/>
            <person name="Jaffe D."/>
            <person name="Johnston S.J."/>
            <person name="Kennedy R.C."/>
            <person name="Koo H."/>
            <person name="Kravitz S."/>
            <person name="Kriventseva E.V."/>
            <person name="Kulp D."/>
            <person name="Labutti K."/>
            <person name="Lee E."/>
            <person name="Li S."/>
            <person name="Lovin D.D."/>
            <person name="Mao C."/>
            <person name="Mauceli E."/>
            <person name="Menck C.F."/>
            <person name="Miller J.R."/>
            <person name="Montgomery P."/>
            <person name="Mori A."/>
            <person name="Nascimento A.L."/>
            <person name="Naveira H.F."/>
            <person name="Nusbaum C."/>
            <person name="O'Leary S.B."/>
            <person name="Orvis J."/>
            <person name="Pertea M."/>
            <person name="Quesneville H."/>
            <person name="Reidenbach K.R."/>
            <person name="Rogers Y.-H.C."/>
            <person name="Roth C.W."/>
            <person name="Schneider J.R."/>
            <person name="Schatz M."/>
            <person name="Shumway M."/>
            <person name="Stanke M."/>
            <person name="Stinson E.O."/>
            <person name="Tubio J.M.C."/>
            <person name="Vanzee J.P."/>
            <person name="Verjovski-Almeida S."/>
            <person name="Werner D."/>
            <person name="White O.R."/>
            <person name="Wyder S."/>
            <person name="Zeng Q."/>
            <person name="Zhao Q."/>
            <person name="Zhao Y."/>
            <person name="Hill C.A."/>
            <person name="Raikhel A.S."/>
            <person name="Soares M.B."/>
            <person name="Knudson D.L."/>
            <person name="Lee N.H."/>
            <person name="Galagan J."/>
            <person name="Salzberg S.L."/>
            <person name="Paulsen I.T."/>
            <person name="Dimopoulos G."/>
            <person name="Collins F.H."/>
            <person name="Bruce B."/>
            <person name="Fraser-Liggett C.M."/>
            <person name="Severson D.W."/>
        </authorList>
    </citation>
    <scope>NUCLEOTIDE SEQUENCE [LARGE SCALE GENOMIC DNA]</scope>
    <source>
        <strain>LVPib12</strain>
    </source>
</reference>
<proteinExistence type="evidence at transcript level"/>
<evidence type="ECO:0000250" key="1">
    <source>
        <dbReference type="UniProtKB" id="P26321"/>
    </source>
</evidence>
<evidence type="ECO:0000305" key="2"/>
<dbReference type="EMBL" id="DQ440352">
    <property type="protein sequence ID" value="ABF18385.1"/>
    <property type="molecule type" value="mRNA"/>
</dbReference>
<dbReference type="EMBL" id="CH477299">
    <property type="protein sequence ID" value="EAT44305.1"/>
    <property type="molecule type" value="Genomic_DNA"/>
</dbReference>
<dbReference type="SMR" id="Q1HQU2"/>
<dbReference type="FunCoup" id="Q1HQU2">
    <property type="interactions" value="1585"/>
</dbReference>
<dbReference type="STRING" id="7159.Q1HQU2"/>
<dbReference type="PaxDb" id="7159-AAEL004325-PA"/>
<dbReference type="EnsemblMetazoa" id="AAEL004325-RA">
    <property type="protein sequence ID" value="AAEL004325-PA"/>
    <property type="gene ID" value="AAEL004325"/>
</dbReference>
<dbReference type="GeneID" id="5564556"/>
<dbReference type="KEGG" id="aag:5564556"/>
<dbReference type="CTD" id="6125"/>
<dbReference type="VEuPathDB" id="VectorBase:AAEL004325"/>
<dbReference type="eggNOG" id="KOG0875">
    <property type="taxonomic scope" value="Eukaryota"/>
</dbReference>
<dbReference type="HOGENOM" id="CLU_056222_1_0_1"/>
<dbReference type="InParanoid" id="Q1HQU2"/>
<dbReference type="OMA" id="CQIASAH"/>
<dbReference type="OrthoDB" id="1618453at2759"/>
<dbReference type="PhylomeDB" id="Q1HQU2"/>
<dbReference type="Proteomes" id="UP000008820">
    <property type="component" value="Chromosome 2"/>
</dbReference>
<dbReference type="Proteomes" id="UP000682892">
    <property type="component" value="Unassembled WGS sequence"/>
</dbReference>
<dbReference type="GO" id="GO:0022625">
    <property type="term" value="C:cytosolic large ribosomal subunit"/>
    <property type="evidence" value="ECO:0007669"/>
    <property type="project" value="TreeGrafter"/>
</dbReference>
<dbReference type="GO" id="GO:0005634">
    <property type="term" value="C:nucleus"/>
    <property type="evidence" value="ECO:0007669"/>
    <property type="project" value="UniProtKB-SubCell"/>
</dbReference>
<dbReference type="GO" id="GO:0008097">
    <property type="term" value="F:5S rRNA binding"/>
    <property type="evidence" value="ECO:0007669"/>
    <property type="project" value="InterPro"/>
</dbReference>
<dbReference type="GO" id="GO:0003735">
    <property type="term" value="F:structural constituent of ribosome"/>
    <property type="evidence" value="ECO:0007669"/>
    <property type="project" value="InterPro"/>
</dbReference>
<dbReference type="GO" id="GO:0000027">
    <property type="term" value="P:ribosomal large subunit assembly"/>
    <property type="evidence" value="ECO:0007669"/>
    <property type="project" value="TreeGrafter"/>
</dbReference>
<dbReference type="GO" id="GO:0006412">
    <property type="term" value="P:translation"/>
    <property type="evidence" value="ECO:0007669"/>
    <property type="project" value="InterPro"/>
</dbReference>
<dbReference type="CDD" id="cd00432">
    <property type="entry name" value="Ribosomal_L18_L5e"/>
    <property type="match status" value="1"/>
</dbReference>
<dbReference type="FunFam" id="3.30.420.100:FF:000002">
    <property type="entry name" value="60S ribosomal protein L5"/>
    <property type="match status" value="1"/>
</dbReference>
<dbReference type="Gene3D" id="3.30.420.100">
    <property type="match status" value="1"/>
</dbReference>
<dbReference type="HAMAP" id="MF_01337_A">
    <property type="entry name" value="Ribosomal_uL18_A"/>
    <property type="match status" value="1"/>
</dbReference>
<dbReference type="InterPro" id="IPR005485">
    <property type="entry name" value="Rbsml_uL18_euk"/>
</dbReference>
<dbReference type="InterPro" id="IPR025607">
    <property type="entry name" value="Ribosomal_uL18_C_euk"/>
</dbReference>
<dbReference type="PANTHER" id="PTHR23410:SF12">
    <property type="entry name" value="LARGE RIBOSOMAL SUBUNIT PROTEIN UL18"/>
    <property type="match status" value="1"/>
</dbReference>
<dbReference type="PANTHER" id="PTHR23410">
    <property type="entry name" value="RIBOSOMAL PROTEIN L5-RELATED"/>
    <property type="match status" value="1"/>
</dbReference>
<dbReference type="Pfam" id="PF14204">
    <property type="entry name" value="Ribosomal_L18_c"/>
    <property type="match status" value="1"/>
</dbReference>
<dbReference type="Pfam" id="PF17144">
    <property type="entry name" value="Ribosomal_L5e"/>
    <property type="match status" value="1"/>
</dbReference>
<dbReference type="PRINTS" id="PR00058">
    <property type="entry name" value="RIBOSOMALL5"/>
</dbReference>
<dbReference type="SUPFAM" id="SSF53137">
    <property type="entry name" value="Translational machinery components"/>
    <property type="match status" value="1"/>
</dbReference>
<feature type="chain" id="PRO_0000291558" description="Large ribosomal subunit protein uL18">
    <location>
        <begin position="1"/>
        <end position="297"/>
    </location>
</feature>
<comment type="function">
    <text evidence="1">Component of the ribosome, a large ribonucleoprotein complex responsible for the synthesis of proteins in the cell. The small ribosomal subunit (SSU) binds messenger RNAs (mRNAs) and translates the encoded message by selecting cognate aminoacyl-transfer RNA (tRNA) molecules. The large subunit (LSU) contains the ribosomal catalytic site termed the peptidyl transferase center (PTC), which catalyzes the formation of peptide bonds, thereby polymerizing the amino acids delivered by tRNAs into a polypeptide chain. The nascent polypeptides leave the ribosome through a tunnel in the LSU and interact with protein factors that function in enzymatic processing, targeting, and the membrane insertion of nascent chains at the exit of the ribosomal tunnel.</text>
</comment>
<comment type="subunit">
    <text evidence="1">Component of the large ribosomal subunit (LSU).</text>
</comment>
<comment type="subcellular location">
    <subcellularLocation>
        <location evidence="1">Cytoplasm</location>
    </subcellularLocation>
    <subcellularLocation>
        <location evidence="1">Nucleus</location>
    </subcellularLocation>
</comment>
<comment type="similarity">
    <text evidence="2">Belongs to the universal ribosomal protein uL18 family.</text>
</comment>
<gene>
    <name type="primary">RpL5</name>
    <name type="ORF">AAEL004325</name>
</gene>